<evidence type="ECO:0000255" key="1">
    <source>
        <dbReference type="HAMAP-Rule" id="MF_00185"/>
    </source>
</evidence>
<comment type="function">
    <text evidence="1">Catalyzes the transfer of a dimethylallyl group onto the adenine at position 37 in tRNAs that read codons beginning with uridine, leading to the formation of N6-(dimethylallyl)adenosine (i(6)A).</text>
</comment>
<comment type="catalytic activity">
    <reaction evidence="1">
        <text>adenosine(37) in tRNA + dimethylallyl diphosphate = N(6)-dimethylallyladenosine(37) in tRNA + diphosphate</text>
        <dbReference type="Rhea" id="RHEA:26482"/>
        <dbReference type="Rhea" id="RHEA-COMP:10162"/>
        <dbReference type="Rhea" id="RHEA-COMP:10375"/>
        <dbReference type="ChEBI" id="CHEBI:33019"/>
        <dbReference type="ChEBI" id="CHEBI:57623"/>
        <dbReference type="ChEBI" id="CHEBI:74411"/>
        <dbReference type="ChEBI" id="CHEBI:74415"/>
        <dbReference type="EC" id="2.5.1.75"/>
    </reaction>
</comment>
<comment type="cofactor">
    <cofactor evidence="1">
        <name>Mg(2+)</name>
        <dbReference type="ChEBI" id="CHEBI:18420"/>
    </cofactor>
</comment>
<comment type="subunit">
    <text evidence="1">Monomer.</text>
</comment>
<comment type="similarity">
    <text evidence="1">Belongs to the IPP transferase family.</text>
</comment>
<name>MIAA_STRAW</name>
<organism>
    <name type="scientific">Streptomyces avermitilis (strain ATCC 31267 / DSM 46492 / JCM 5070 / NBRC 14893 / NCIMB 12804 / NRRL 8165 / MA-4680)</name>
    <dbReference type="NCBI Taxonomy" id="227882"/>
    <lineage>
        <taxon>Bacteria</taxon>
        <taxon>Bacillati</taxon>
        <taxon>Actinomycetota</taxon>
        <taxon>Actinomycetes</taxon>
        <taxon>Kitasatosporales</taxon>
        <taxon>Streptomycetaceae</taxon>
        <taxon>Streptomyces</taxon>
    </lineage>
</organism>
<proteinExistence type="inferred from homology"/>
<dbReference type="EC" id="2.5.1.75" evidence="1"/>
<dbReference type="EMBL" id="BA000030">
    <property type="protein sequence ID" value="BAC70186.1"/>
    <property type="molecule type" value="Genomic_DNA"/>
</dbReference>
<dbReference type="RefSeq" id="WP_010983912.1">
    <property type="nucleotide sequence ID" value="NZ_JZJK01000086.1"/>
</dbReference>
<dbReference type="SMR" id="Q82KC8"/>
<dbReference type="GeneID" id="41539561"/>
<dbReference type="KEGG" id="sma:SAVERM_2475"/>
<dbReference type="eggNOG" id="COG0324">
    <property type="taxonomic scope" value="Bacteria"/>
</dbReference>
<dbReference type="HOGENOM" id="CLU_032616_0_1_11"/>
<dbReference type="OrthoDB" id="9776390at2"/>
<dbReference type="Proteomes" id="UP000000428">
    <property type="component" value="Chromosome"/>
</dbReference>
<dbReference type="GO" id="GO:0005524">
    <property type="term" value="F:ATP binding"/>
    <property type="evidence" value="ECO:0007669"/>
    <property type="project" value="UniProtKB-UniRule"/>
</dbReference>
<dbReference type="GO" id="GO:0052381">
    <property type="term" value="F:tRNA dimethylallyltransferase activity"/>
    <property type="evidence" value="ECO:0007669"/>
    <property type="project" value="UniProtKB-UniRule"/>
</dbReference>
<dbReference type="GO" id="GO:0006400">
    <property type="term" value="P:tRNA modification"/>
    <property type="evidence" value="ECO:0007669"/>
    <property type="project" value="TreeGrafter"/>
</dbReference>
<dbReference type="FunFam" id="1.10.20.140:FF:000001">
    <property type="entry name" value="tRNA dimethylallyltransferase"/>
    <property type="match status" value="1"/>
</dbReference>
<dbReference type="Gene3D" id="1.10.20.140">
    <property type="match status" value="1"/>
</dbReference>
<dbReference type="Gene3D" id="3.40.50.300">
    <property type="entry name" value="P-loop containing nucleotide triphosphate hydrolases"/>
    <property type="match status" value="1"/>
</dbReference>
<dbReference type="HAMAP" id="MF_00185">
    <property type="entry name" value="IPP_trans"/>
    <property type="match status" value="1"/>
</dbReference>
<dbReference type="InterPro" id="IPR039657">
    <property type="entry name" value="Dimethylallyltransferase"/>
</dbReference>
<dbReference type="InterPro" id="IPR018022">
    <property type="entry name" value="IPT"/>
</dbReference>
<dbReference type="InterPro" id="IPR027417">
    <property type="entry name" value="P-loop_NTPase"/>
</dbReference>
<dbReference type="NCBIfam" id="TIGR00174">
    <property type="entry name" value="miaA"/>
    <property type="match status" value="1"/>
</dbReference>
<dbReference type="PANTHER" id="PTHR11088">
    <property type="entry name" value="TRNA DIMETHYLALLYLTRANSFERASE"/>
    <property type="match status" value="1"/>
</dbReference>
<dbReference type="PANTHER" id="PTHR11088:SF60">
    <property type="entry name" value="TRNA DIMETHYLALLYLTRANSFERASE"/>
    <property type="match status" value="1"/>
</dbReference>
<dbReference type="Pfam" id="PF01715">
    <property type="entry name" value="IPPT"/>
    <property type="match status" value="1"/>
</dbReference>
<dbReference type="SUPFAM" id="SSF52540">
    <property type="entry name" value="P-loop containing nucleoside triphosphate hydrolases"/>
    <property type="match status" value="1"/>
</dbReference>
<gene>
    <name evidence="1" type="primary">miaA</name>
    <name type="ordered locus">SAV_2475</name>
</gene>
<feature type="chain" id="PRO_0000163982" description="tRNA dimethylallyltransferase">
    <location>
        <begin position="1"/>
        <end position="312"/>
    </location>
</feature>
<feature type="region of interest" description="Interaction with substrate tRNA" evidence="1">
    <location>
        <begin position="40"/>
        <end position="43"/>
    </location>
</feature>
<feature type="binding site" evidence="1">
    <location>
        <begin position="15"/>
        <end position="22"/>
    </location>
    <ligand>
        <name>ATP</name>
        <dbReference type="ChEBI" id="CHEBI:30616"/>
    </ligand>
</feature>
<feature type="binding site" evidence="1">
    <location>
        <begin position="17"/>
        <end position="22"/>
    </location>
    <ligand>
        <name>substrate</name>
    </ligand>
</feature>
<feature type="site" description="Interaction with substrate tRNA" evidence="1">
    <location>
        <position position="106"/>
    </location>
</feature>
<feature type="site" description="Interaction with substrate tRNA" evidence="1">
    <location>
        <position position="127"/>
    </location>
</feature>
<sequence>MSSAPPAPRVIAVVGPTAAGKSDLGVFLAQRLDGEVVNADSMQLYRGMDIGTAKLTPEERGGIPHHLLDIWDVTVAASVAEYQRLARARIDALLAEGRWPILVGGSGLYVRGAVDNLEFPGTDPEVRARLEEELALRGPGALHARLAAADPEAGHAILSSNGRRIVRALEVIEITGRPFTANLPGHDSVYDTVQIGVDVARPELDERIARRVDRMWEAGLVDEVRALEAQGLREGRTASRALGYQQVLAALAGECTEDEARAETVRATKRFARRQDSWFRRDPRVHWLSGAAADLTELPQLALMLVERPVTA</sequence>
<protein>
    <recommendedName>
        <fullName evidence="1">tRNA dimethylallyltransferase</fullName>
        <ecNumber evidence="1">2.5.1.75</ecNumber>
    </recommendedName>
    <alternativeName>
        <fullName evidence="1">Dimethylallyl diphosphate:tRNA dimethylallyltransferase</fullName>
        <shortName evidence="1">DMAPP:tRNA dimethylallyltransferase</shortName>
        <shortName evidence="1">DMATase</shortName>
    </alternativeName>
    <alternativeName>
        <fullName evidence="1">Isopentenyl-diphosphate:tRNA isopentenyltransferase</fullName>
        <shortName evidence="1">IPP transferase</shortName>
        <shortName evidence="1">IPPT</shortName>
        <shortName evidence="1">IPTase</shortName>
    </alternativeName>
</protein>
<accession>Q82KC8</accession>
<reference key="1">
    <citation type="journal article" date="2001" name="Proc. Natl. Acad. Sci. U.S.A.">
        <title>Genome sequence of an industrial microorganism Streptomyces avermitilis: deducing the ability of producing secondary metabolites.</title>
        <authorList>
            <person name="Omura S."/>
            <person name="Ikeda H."/>
            <person name="Ishikawa J."/>
            <person name="Hanamoto A."/>
            <person name="Takahashi C."/>
            <person name="Shinose M."/>
            <person name="Takahashi Y."/>
            <person name="Horikawa H."/>
            <person name="Nakazawa H."/>
            <person name="Osonoe T."/>
            <person name="Kikuchi H."/>
            <person name="Shiba T."/>
            <person name="Sakaki Y."/>
            <person name="Hattori M."/>
        </authorList>
    </citation>
    <scope>NUCLEOTIDE SEQUENCE [LARGE SCALE GENOMIC DNA]</scope>
    <source>
        <strain>ATCC 31267 / DSM 46492 / JCM 5070 / NBRC 14893 / NCIMB 12804 / NRRL 8165 / MA-4680</strain>
    </source>
</reference>
<reference key="2">
    <citation type="journal article" date="2003" name="Nat. Biotechnol.">
        <title>Complete genome sequence and comparative analysis of the industrial microorganism Streptomyces avermitilis.</title>
        <authorList>
            <person name="Ikeda H."/>
            <person name="Ishikawa J."/>
            <person name="Hanamoto A."/>
            <person name="Shinose M."/>
            <person name="Kikuchi H."/>
            <person name="Shiba T."/>
            <person name="Sakaki Y."/>
            <person name="Hattori M."/>
            <person name="Omura S."/>
        </authorList>
    </citation>
    <scope>NUCLEOTIDE SEQUENCE [LARGE SCALE GENOMIC DNA]</scope>
    <source>
        <strain>ATCC 31267 / DSM 46492 / JCM 5070 / NBRC 14893 / NCIMB 12804 / NRRL 8165 / MA-4680</strain>
    </source>
</reference>
<keyword id="KW-0067">ATP-binding</keyword>
<keyword id="KW-0460">Magnesium</keyword>
<keyword id="KW-0547">Nucleotide-binding</keyword>
<keyword id="KW-1185">Reference proteome</keyword>
<keyword id="KW-0808">Transferase</keyword>
<keyword id="KW-0819">tRNA processing</keyword>